<accession>P48269</accession>
<accession>B7U1H0</accession>
<geneLocation type="chloroplast"/>
<evidence type="ECO:0000269" key="1">
    <source>
    </source>
</evidence>
<evidence type="ECO:0000269" key="2">
    <source>
    </source>
</evidence>
<evidence type="ECO:0000305" key="3"/>
<evidence type="ECO:0000305" key="4">
    <source>
    </source>
</evidence>
<feature type="chain" id="PRO_0000201600" description="Cytochrome c biogenesis protein CcsA">
    <location>
        <begin position="1"/>
        <end position="353"/>
    </location>
</feature>
<feature type="transmembrane region" description="Helical" evidence="3">
    <location>
        <begin position="15"/>
        <end position="32"/>
    </location>
</feature>
<feature type="topological domain" description="Lumenal" evidence="4">
    <location>
        <begin position="33"/>
        <end position="208"/>
    </location>
</feature>
<feature type="transmembrane region" description="Helical" evidence="3">
    <location>
        <begin position="209"/>
        <end position="233"/>
    </location>
</feature>
<feature type="topological domain" description="Stromal" evidence="4">
    <location>
        <begin position="234"/>
        <end position="260"/>
    </location>
</feature>
<feature type="transmembrane region" description="Helical" evidence="3">
    <location>
        <begin position="261"/>
        <end position="278"/>
    </location>
</feature>
<feature type="topological domain" description="Lumenal" evidence="4">
    <location>
        <begin position="279"/>
        <end position="295"/>
    </location>
</feature>
<feature type="transmembrane region" description="Helical" evidence="3">
    <location>
        <begin position="296"/>
        <end position="313"/>
    </location>
</feature>
<feature type="topological domain" description="Stromal" evidence="4">
    <location>
        <begin position="314"/>
        <end position="323"/>
    </location>
</feature>
<feature type="transmembrane region" description="Helical" evidence="3">
    <location>
        <begin position="324"/>
        <end position="342"/>
    </location>
</feature>
<feature type="topological domain" description="Lumenal" evidence="4">
    <location>
        <begin position="343"/>
        <end position="353"/>
    </location>
</feature>
<feature type="mutagenesis site" description="Almost no c-type holocytochrome formation." evidence="1">
    <original>M</original>
    <variation>D</variation>
    <location>
        <position position="1"/>
    </location>
</feature>
<feature type="mutagenesis site" description="No effect on c-type holocytochrome formation." evidence="1">
    <original>M</original>
    <variation>A</variation>
    <location>
        <position position="20"/>
    </location>
</feature>
<feature type="mutagenesis site" description="Abrogates production of c-type holocytochrome." evidence="1">
    <original>H</original>
    <variation>D</variation>
    <location>
        <position position="212"/>
    </location>
</feature>
<feature type="mutagenesis site" description="Abrogates production of c-type holocytochrome." evidence="1">
    <original>W</original>
    <variation>A</variation>
    <location>
        <position position="279"/>
    </location>
</feature>
<feature type="mutagenesis site" description="Severely reduces amounts of c-type holocytochrome produced.">
    <original>W</original>
    <variation>A</variation>
    <location>
        <position position="284"/>
    </location>
</feature>
<feature type="mutagenesis site" description="Reduced amounts of c-type holocytochromes produced; a more severe reduction than seen with either single mutation.">
    <original>WSW</original>
    <variation>ASA</variation>
    <location>
        <begin position="288"/>
        <end position="290"/>
    </location>
</feature>
<feature type="mutagenesis site" description="Reduced amounts of c-type holocytochromes produced." evidence="1">
    <original>W</original>
    <variation>A</variation>
    <location>
        <position position="288"/>
    </location>
</feature>
<feature type="mutagenesis site" description="Reduced amounts of c-type holocytochromes produced." evidence="1">
    <original>W</original>
    <variation>A</variation>
    <location>
        <position position="290"/>
    </location>
</feature>
<feature type="mutagenesis site" description="Abrogates production of c-type holocytochrome. No assembly of cytochrome c6 occurs." evidence="1">
    <original>D</original>
    <variation>A</variation>
    <location>
        <position position="291"/>
    </location>
</feature>
<feature type="mutagenesis site" description="Abrogates production of c-type holocytochrome. Permits small amounts of cytochrome c6 assembly." evidence="1">
    <original>D</original>
    <variation>E</variation>
    <variation>N</variation>
    <location>
        <position position="291"/>
    </location>
</feature>
<feature type="mutagenesis site" description="No effect on activity." evidence="1">
    <original>W</original>
    <variation>A</variation>
    <location>
        <position position="296"/>
    </location>
</feature>
<feature type="mutagenesis site" description="No effect on activity." evidence="1">
    <original>W</original>
    <variation>A</variation>
    <location>
        <position position="301"/>
    </location>
</feature>
<feature type="mutagenesis site" description="Abrogates production of c-type holocytochrome." evidence="1">
    <original>H</original>
    <variation>E</variation>
    <location>
        <position position="309"/>
    </location>
</feature>
<feature type="mutagenesis site" description="Abrogates production of c-type holocytochrome." evidence="1">
    <original>H</original>
    <variation>A</variation>
    <variation>E</variation>
    <location>
        <position position="347"/>
    </location>
</feature>
<feature type="sequence conflict" description="In Ref. 1; AAA76600." evidence="3" ref="1">
    <original>I</original>
    <variation>T</variation>
    <location>
        <position position="342"/>
    </location>
</feature>
<organism>
    <name type="scientific">Chlamydomonas reinhardtii</name>
    <name type="common">Chlamydomonas smithii</name>
    <dbReference type="NCBI Taxonomy" id="3055"/>
    <lineage>
        <taxon>Eukaryota</taxon>
        <taxon>Viridiplantae</taxon>
        <taxon>Chlorophyta</taxon>
        <taxon>core chlorophytes</taxon>
        <taxon>Chlorophyceae</taxon>
        <taxon>CS clade</taxon>
        <taxon>Chlamydomonadales</taxon>
        <taxon>Chlamydomonadaceae</taxon>
        <taxon>Chlamydomonas</taxon>
    </lineage>
</organism>
<keyword id="KW-0150">Chloroplast</keyword>
<keyword id="KW-0201">Cytochrome c-type biogenesis</keyword>
<keyword id="KW-0472">Membrane</keyword>
<keyword id="KW-0934">Plastid</keyword>
<keyword id="KW-1185">Reference proteome</keyword>
<keyword id="KW-0793">Thylakoid</keyword>
<keyword id="KW-0812">Transmembrane</keyword>
<keyword id="KW-1133">Transmembrane helix</keyword>
<gene>
    <name type="primary">ccsA</name>
</gene>
<proteinExistence type="evidence at protein level"/>
<comment type="function">
    <text evidence="2">Required during biogenesis of c-type cytochromes (cytochrome c6 and cytochrome f) at the step of heme attachment.</text>
</comment>
<comment type="subunit">
    <text evidence="3">May interact with Ccs1.</text>
</comment>
<comment type="subcellular location">
    <subcellularLocation>
        <location evidence="3">Plastid</location>
        <location evidence="3">Chloroplast thylakoid membrane</location>
        <topology evidence="3">Multi-pass membrane protein</topology>
    </subcellularLocation>
</comment>
<comment type="miscellaneous">
    <text>Met-1 is the initiator; however when Met-1 is mutated a low amount of protein may be produced, probably from Met-20.</text>
</comment>
<comment type="similarity">
    <text evidence="3">Belongs to the CcmF/CycK/Ccl1/NrfE/CcsA family.</text>
</comment>
<reference key="1">
    <citation type="journal article" date="1995" name="Plant Physiol.">
        <title>Identification of a Chlamydomonas reinhardtii chloroplast gene with significant homology to bacterial genes involved in cytochrome c biosynthesis.</title>
        <authorList>
            <person name="Chen Z.Y."/>
            <person name="Moroney J.V."/>
        </authorList>
    </citation>
    <scope>NUCLEOTIDE SEQUENCE [GENOMIC DNA]</scope>
    <source>
        <strain>CC-400</strain>
    </source>
</reference>
<reference key="2">
    <citation type="journal article" date="1996" name="J. Biol. Chem.">
        <title>The plastid-encoded ccsA gene is required for heme attachment to chloroplast c-type cytochromes.</title>
        <authorList>
            <person name="Xie Z."/>
            <person name="Merchant S."/>
        </authorList>
    </citation>
    <scope>NUCLEOTIDE SEQUENCE [GENOMIC DNA]</scope>
    <scope>FUNCTION</scope>
    <source>
        <strain>CC-503</strain>
    </source>
</reference>
<reference key="3">
    <citation type="journal article" date="2009" name="BMC Evol. Biol.">
        <title>Nucleotide diversity of the Chlamydomonas reinhardtii plastid genome: addressing the mutational-hazard hypothesis.</title>
        <authorList>
            <person name="Smith D.R."/>
            <person name="Lee R.W."/>
        </authorList>
    </citation>
    <scope>NUCLEOTIDE SEQUENCE [LARGE SCALE GENOMIC DNA]</scope>
    <source>
        <strain>CC-503</strain>
    </source>
</reference>
<reference key="4">
    <citation type="journal article" date="2002" name="Plant Cell">
        <title>The Chlamydomonas reinhardtii plastid chromosome: islands of genes in a sea of repeats.</title>
        <authorList>
            <person name="Maul J.E."/>
            <person name="Lilly J.W."/>
            <person name="Cui L."/>
            <person name="dePamphilis C.W."/>
            <person name="Miller W."/>
            <person name="Harris E.H."/>
            <person name="Stern D.B."/>
        </authorList>
    </citation>
    <scope>IDENTIFICATION</scope>
    <scope>COMPLETE PLASTID GENOME</scope>
</reference>
<reference key="5">
    <citation type="journal article" date="2003" name="J. Biol. Chem.">
        <title>Essential histidine and tryptophan residues in CcsA, a system II polytopic cytochrome c biogenesis protein.</title>
        <authorList>
            <person name="Hamel P.P."/>
            <person name="Dreyfuss B.W."/>
            <person name="Xie Z."/>
            <person name="Gabilly S.T."/>
            <person name="Merchant S."/>
        </authorList>
    </citation>
    <scope>START SITE IDENTIFICATION</scope>
    <scope>TOPOLOGY</scope>
    <scope>MUTAGENESIS OF MET-1; MET-20; HIS-212; TRP-279; TRP-288; TRP-290; ASP-291; TRP-296; TRP-301; HIS-309 AND HIS-347</scope>
    <source>
        <strain>137c / CC-125</strain>
    </source>
</reference>
<reference key="6">
    <citation type="journal article" date="1998" name="Biochim. Biophys. Acta">
        <title>A novel pathway for cytochromes c biogenesis in chloroplasts.</title>
        <authorList>
            <person name="Xie Z."/>
            <person name="Merchant S."/>
        </authorList>
    </citation>
    <scope>REVIEW</scope>
</reference>
<sequence>MNFVNLEQIENSLRNATFCMLFLTTFLYWFYTAFYSTNPQQIINPLSLTNIKTNFTYPDGFQANNINVSTTYLPINPVLNTEREEQPEANGTNGLLGVSSLVVNLKSIAIPRIMMGVSNLLLVLLLLVRWEKSGHFPLSNLYESLMFLAWCCTFLYLLYCTSFTLLVEKMLGSLIAPCSLLMNAFATFSLPKEMQQASPLVPALQSNWLMMHVTVMIISYATLIIGSLLSILFLILFKHKKGTPKKYDNFINNLDALSYRIIGLGFPFLTIGILSGAVWANEAWGSYWSWDPKETWALLTWLVFAIYLHTRLTKGWEGEKPAIIAAVGFLVVWFCYLGVNLIGEGLHSYGFFN</sequence>
<dbReference type="EMBL" id="U15556">
    <property type="protein sequence ID" value="AAA76600.1"/>
    <property type="molecule type" value="Genomic_DNA"/>
</dbReference>
<dbReference type="EMBL" id="U09190">
    <property type="protein sequence ID" value="AAB03815.1"/>
    <property type="molecule type" value="Genomic_DNA"/>
</dbReference>
<dbReference type="EMBL" id="FJ423446">
    <property type="protein sequence ID" value="ACJ50117.1"/>
    <property type="molecule type" value="Genomic_DNA"/>
</dbReference>
<dbReference type="EMBL" id="BK000554">
    <property type="protein sequence ID" value="DAA00929.1"/>
    <property type="molecule type" value="Genomic_DNA"/>
</dbReference>
<dbReference type="PIR" id="T07998">
    <property type="entry name" value="T07998"/>
</dbReference>
<dbReference type="PIR" id="T08001">
    <property type="entry name" value="T08001"/>
</dbReference>
<dbReference type="RefSeq" id="NP_958384.1">
    <property type="nucleotide sequence ID" value="NC_005353.1"/>
</dbReference>
<dbReference type="SMR" id="P48269"/>
<dbReference type="FunCoup" id="P48269">
    <property type="interactions" value="10"/>
</dbReference>
<dbReference type="STRING" id="3055.P48269"/>
<dbReference type="TCDB" id="9.B.14.3.3">
    <property type="family name" value="the putative heme handling protein (hhp) family"/>
</dbReference>
<dbReference type="PaxDb" id="3055-DAA00929"/>
<dbReference type="GeneID" id="2717027"/>
<dbReference type="KEGG" id="cre:ChreCp028"/>
<dbReference type="eggNOG" id="ENOG502QU0T">
    <property type="taxonomic scope" value="Eukaryota"/>
</dbReference>
<dbReference type="HOGENOM" id="CLU_049710_2_4_1"/>
<dbReference type="InParanoid" id="P48269"/>
<dbReference type="Proteomes" id="UP000006906">
    <property type="component" value="Chloroplast"/>
</dbReference>
<dbReference type="GO" id="GO:0009535">
    <property type="term" value="C:chloroplast thylakoid membrane"/>
    <property type="evidence" value="ECO:0007669"/>
    <property type="project" value="UniProtKB-SubCell"/>
</dbReference>
<dbReference type="GO" id="GO:0020037">
    <property type="term" value="F:heme binding"/>
    <property type="evidence" value="ECO:0007669"/>
    <property type="project" value="InterPro"/>
</dbReference>
<dbReference type="GO" id="GO:0017004">
    <property type="term" value="P:cytochrome complex assembly"/>
    <property type="evidence" value="ECO:0007669"/>
    <property type="project" value="UniProtKB-UniRule"/>
</dbReference>
<dbReference type="HAMAP" id="MF_01391">
    <property type="entry name" value="CytC_CcsA"/>
    <property type="match status" value="1"/>
</dbReference>
<dbReference type="InterPro" id="IPR002541">
    <property type="entry name" value="Cyt_c_assembly"/>
</dbReference>
<dbReference type="InterPro" id="IPR017562">
    <property type="entry name" value="Cyt_c_biogenesis_CcsA"/>
</dbReference>
<dbReference type="InterPro" id="IPR045062">
    <property type="entry name" value="Cyt_c_biogenesis_CcsA/CcmC"/>
</dbReference>
<dbReference type="NCBIfam" id="TIGR03144">
    <property type="entry name" value="cytochr_II_ccsB"/>
    <property type="match status" value="1"/>
</dbReference>
<dbReference type="PANTHER" id="PTHR30071:SF1">
    <property type="entry name" value="CYTOCHROME B_B6 PROTEIN-RELATED"/>
    <property type="match status" value="1"/>
</dbReference>
<dbReference type="PANTHER" id="PTHR30071">
    <property type="entry name" value="HEME EXPORTER PROTEIN C"/>
    <property type="match status" value="1"/>
</dbReference>
<dbReference type="Pfam" id="PF01578">
    <property type="entry name" value="Cytochrom_C_asm"/>
    <property type="match status" value="1"/>
</dbReference>
<name>CCSA_CHLRE</name>
<protein>
    <recommendedName>
        <fullName>Cytochrome c biogenesis protein CcsA</fullName>
    </recommendedName>
</protein>